<gene>
    <name evidence="5" type="primary">cysF</name>
    <name type="ORF">AN1513</name>
</gene>
<name>CYSKL_EMENI</name>
<evidence type="ECO:0000250" key="1">
    <source>
        <dbReference type="UniProtKB" id="P0ABK5"/>
    </source>
</evidence>
<evidence type="ECO:0000250" key="2">
    <source>
        <dbReference type="UniProtKB" id="P16703"/>
    </source>
</evidence>
<evidence type="ECO:0000250" key="3">
    <source>
        <dbReference type="UniProtKB" id="Q7SHQ1"/>
    </source>
</evidence>
<evidence type="ECO:0000255" key="4"/>
<evidence type="ECO:0000303" key="5">
    <source>
    </source>
</evidence>
<evidence type="ECO:0000305" key="6"/>
<evidence type="ECO:0000305" key="7">
    <source>
    </source>
</evidence>
<feature type="chain" id="PRO_0000436603" description="Cysteine synthase 2">
    <location>
        <begin position="1"/>
        <end position="428"/>
    </location>
</feature>
<feature type="transmembrane region" description="Helical" evidence="4">
    <location>
        <begin position="7"/>
        <end position="27"/>
    </location>
</feature>
<feature type="binding site" evidence="2">
    <location>
        <begin position="260"/>
        <end position="264"/>
    </location>
    <ligand>
        <name>pyridoxal 5'-phosphate</name>
        <dbReference type="ChEBI" id="CHEBI:597326"/>
    </ligand>
</feature>
<feature type="binding site" evidence="2">
    <location>
        <position position="367"/>
    </location>
    <ligand>
        <name>pyridoxal 5'-phosphate</name>
        <dbReference type="ChEBI" id="CHEBI:597326"/>
    </ligand>
</feature>
<feature type="modified residue" description="N6-(pyridoxal phosphate)lysine" evidence="2">
    <location>
        <position position="106"/>
    </location>
</feature>
<reference key="1">
    <citation type="journal article" date="2005" name="Nature">
        <title>Sequencing of Aspergillus nidulans and comparative analysis with A. fumigatus and A. oryzae.</title>
        <authorList>
            <person name="Galagan J.E."/>
            <person name="Calvo S.E."/>
            <person name="Cuomo C."/>
            <person name="Ma L.-J."/>
            <person name="Wortman J.R."/>
            <person name="Batzoglou S."/>
            <person name="Lee S.-I."/>
            <person name="Bastuerkmen M."/>
            <person name="Spevak C.C."/>
            <person name="Clutterbuck J."/>
            <person name="Kapitonov V."/>
            <person name="Jurka J."/>
            <person name="Scazzocchio C."/>
            <person name="Farman M.L."/>
            <person name="Butler J."/>
            <person name="Purcell S."/>
            <person name="Harris S."/>
            <person name="Braus G.H."/>
            <person name="Draht O."/>
            <person name="Busch S."/>
            <person name="D'Enfert C."/>
            <person name="Bouchier C."/>
            <person name="Goldman G.H."/>
            <person name="Bell-Pedersen D."/>
            <person name="Griffiths-Jones S."/>
            <person name="Doonan J.H."/>
            <person name="Yu J."/>
            <person name="Vienken K."/>
            <person name="Pain A."/>
            <person name="Freitag M."/>
            <person name="Selker E.U."/>
            <person name="Archer D.B."/>
            <person name="Penalva M.A."/>
            <person name="Oakley B.R."/>
            <person name="Momany M."/>
            <person name="Tanaka T."/>
            <person name="Kumagai T."/>
            <person name="Asai K."/>
            <person name="Machida M."/>
            <person name="Nierman W.C."/>
            <person name="Denning D.W."/>
            <person name="Caddick M.X."/>
            <person name="Hynes M."/>
            <person name="Paoletti M."/>
            <person name="Fischer R."/>
            <person name="Miller B.L."/>
            <person name="Dyer P.S."/>
            <person name="Sachs M.S."/>
            <person name="Osmani S.A."/>
            <person name="Birren B.W."/>
        </authorList>
    </citation>
    <scope>NUCLEOTIDE SEQUENCE [LARGE SCALE GENOMIC DNA]</scope>
    <source>
        <strain>FGSC A4 / ATCC 38163 / CBS 112.46 / NRRL 194 / M139</strain>
    </source>
</reference>
<reference key="2">
    <citation type="journal article" date="2009" name="Fungal Genet. Biol.">
        <title>The 2008 update of the Aspergillus nidulans genome annotation: a community effort.</title>
        <authorList>
            <person name="Wortman J.R."/>
            <person name="Gilsenan J.M."/>
            <person name="Joardar V."/>
            <person name="Deegan J."/>
            <person name="Clutterbuck J."/>
            <person name="Andersen M.R."/>
            <person name="Archer D."/>
            <person name="Bencina M."/>
            <person name="Braus G."/>
            <person name="Coutinho P."/>
            <person name="von Dohren H."/>
            <person name="Doonan J."/>
            <person name="Driessen A.J."/>
            <person name="Durek P."/>
            <person name="Espeso E."/>
            <person name="Fekete E."/>
            <person name="Flipphi M."/>
            <person name="Estrada C.G."/>
            <person name="Geysens S."/>
            <person name="Goldman G."/>
            <person name="de Groot P.W."/>
            <person name="Hansen K."/>
            <person name="Harris S.D."/>
            <person name="Heinekamp T."/>
            <person name="Helmstaedt K."/>
            <person name="Henrissat B."/>
            <person name="Hofmann G."/>
            <person name="Homan T."/>
            <person name="Horio T."/>
            <person name="Horiuchi H."/>
            <person name="James S."/>
            <person name="Jones M."/>
            <person name="Karaffa L."/>
            <person name="Karanyi Z."/>
            <person name="Kato M."/>
            <person name="Keller N."/>
            <person name="Kelly D.E."/>
            <person name="Kiel J.A."/>
            <person name="Kim J.M."/>
            <person name="van der Klei I.J."/>
            <person name="Klis F.M."/>
            <person name="Kovalchuk A."/>
            <person name="Krasevec N."/>
            <person name="Kubicek C.P."/>
            <person name="Liu B."/>
            <person name="Maccabe A."/>
            <person name="Meyer V."/>
            <person name="Mirabito P."/>
            <person name="Miskei M."/>
            <person name="Mos M."/>
            <person name="Mullins J."/>
            <person name="Nelson D.R."/>
            <person name="Nielsen J."/>
            <person name="Oakley B.R."/>
            <person name="Osmani S.A."/>
            <person name="Pakula T."/>
            <person name="Paszewski A."/>
            <person name="Paulsen I."/>
            <person name="Pilsyk S."/>
            <person name="Pocsi I."/>
            <person name="Punt P.J."/>
            <person name="Ram A.F."/>
            <person name="Ren Q."/>
            <person name="Robellet X."/>
            <person name="Robson G."/>
            <person name="Seiboth B."/>
            <person name="van Solingen P."/>
            <person name="Specht T."/>
            <person name="Sun J."/>
            <person name="Taheri-Talesh N."/>
            <person name="Takeshita N."/>
            <person name="Ussery D."/>
            <person name="vanKuyk P.A."/>
            <person name="Visser H."/>
            <person name="van de Vondervoort P.J."/>
            <person name="de Vries R.P."/>
            <person name="Walton J."/>
            <person name="Xiang X."/>
            <person name="Xiong Y."/>
            <person name="Zeng A.P."/>
            <person name="Brandt B.W."/>
            <person name="Cornell M.J."/>
            <person name="van den Hondel C.A."/>
            <person name="Visser J."/>
            <person name="Oliver S.G."/>
            <person name="Turner G."/>
        </authorList>
    </citation>
    <scope>GENOME REANNOTATION</scope>
    <source>
        <strain>FGSC A4 / ATCC 38163 / CBS 112.46 / NRRL 194 / M139</strain>
    </source>
</reference>
<reference key="3">
    <citation type="journal article" date="2007" name="Res. Microbiol.">
        <title>Multiple fungal enzymes possess cysteine synthase activity in vitro.</title>
        <authorList>
            <person name="Brzywczy J."/>
            <person name="Natorff R."/>
            <person name="Sienko M."/>
            <person name="Paszewski A."/>
        </authorList>
    </citation>
    <scope>FUNCTION</scope>
</reference>
<organism>
    <name type="scientific">Emericella nidulans (strain FGSC A4 / ATCC 38163 / CBS 112.46 / NRRL 194 / M139)</name>
    <name type="common">Aspergillus nidulans</name>
    <dbReference type="NCBI Taxonomy" id="227321"/>
    <lineage>
        <taxon>Eukaryota</taxon>
        <taxon>Fungi</taxon>
        <taxon>Dikarya</taxon>
        <taxon>Ascomycota</taxon>
        <taxon>Pezizomycotina</taxon>
        <taxon>Eurotiomycetes</taxon>
        <taxon>Eurotiomycetidae</taxon>
        <taxon>Eurotiales</taxon>
        <taxon>Aspergillaceae</taxon>
        <taxon>Aspergillus</taxon>
        <taxon>Aspergillus subgen. Nidulantes</taxon>
    </lineage>
</organism>
<accession>Q5BD67</accession>
<accession>C8VMP5</accession>
<proteinExistence type="inferred from homology"/>
<sequence>MPDHSHIYIGSAFVAGVVLTIAFKDLFYPEIEERIRDYRARHSSKSYQNASVDSLAVRHGPPAIVDGIEGCIGNTPLLRIKSLSEATGCEILAKAEFLNGAGQSSKDRVALSMIELAEERGLMTPHSGDTIYEGTSGSTGISLATLARAKGYLAHICMPSDQAIEKSNLLLKLGAIVDRVPPAPIVEKDNFVNRARALAQAHTNSTASESSVGTASQRGRGYFADQFENEANWRAHYNGTGPEIYAQCNGSLDAFVAGAGTGGTISGVALYLKPRIPNMTVVVADPQGSGLYNRVRYGVMFDTKEKEGTRRRRQVDTIVEGIGINRVTANFEAGRELVDDAVRVTDAQALAMARWLVEKDGIFAGSSSAVNCFAAVKTALKLGPGHRIVTMLSDSGSRHLSRFWAKAGNVGGAVDTKLEDVLNAKEDQ</sequence>
<comment type="function">
    <text evidence="7">Putative cysteine synthase that catalyzes the conversion of O-acetyl-L-serine (OAS) into cysteine, the last step in the cysteine biosynthesis pathway. However, in contrast to cysteine synthase cysB, this CS-like protein seems not to function in cysteine biosynthesis.</text>
</comment>
<comment type="catalytic activity">
    <reaction evidence="1">
        <text>O-acetyl-L-serine + hydrogen sulfide = L-cysteine + acetate</text>
        <dbReference type="Rhea" id="RHEA:14829"/>
        <dbReference type="ChEBI" id="CHEBI:29919"/>
        <dbReference type="ChEBI" id="CHEBI:30089"/>
        <dbReference type="ChEBI" id="CHEBI:35235"/>
        <dbReference type="ChEBI" id="CHEBI:58340"/>
        <dbReference type="EC" id="2.5.1.47"/>
    </reaction>
</comment>
<comment type="cofactor">
    <cofactor evidence="1">
        <name>pyridoxal 5'-phosphate</name>
        <dbReference type="ChEBI" id="CHEBI:597326"/>
    </cofactor>
</comment>
<comment type="subcellular location">
    <subcellularLocation>
        <location evidence="3">Mitochondrion outer membrane</location>
        <topology evidence="4">Single-pass membrane protein</topology>
    </subcellularLocation>
</comment>
<comment type="similarity">
    <text evidence="6">Belongs to the cysteine synthase/cystathionine beta-synthase family.</text>
</comment>
<protein>
    <recommendedName>
        <fullName evidence="6">Cysteine synthase 2</fullName>
        <shortName>CS 2</shortName>
        <ecNumber evidence="1">2.5.1.47</ecNumber>
    </recommendedName>
    <alternativeName>
        <fullName evidence="5">Cysteine synthase-like protein</fullName>
        <shortName>CSl</shortName>
    </alternativeName>
    <alternativeName>
        <fullName>O-acetylserine (thiol)-lyase 2</fullName>
        <shortName>OAS-TL 2</shortName>
    </alternativeName>
    <alternativeName>
        <fullName>O-acetylserine sulfhydrylase 2</fullName>
    </alternativeName>
</protein>
<dbReference type="EC" id="2.5.1.47" evidence="1"/>
<dbReference type="EMBL" id="BN001307">
    <property type="protein sequence ID" value="CBF85019.1"/>
    <property type="molecule type" value="Genomic_DNA"/>
</dbReference>
<dbReference type="EMBL" id="AACD01000023">
    <property type="protein sequence ID" value="EAA63826.1"/>
    <property type="molecule type" value="Genomic_DNA"/>
</dbReference>
<dbReference type="RefSeq" id="XP_659117.1">
    <property type="nucleotide sequence ID" value="XM_654025.1"/>
</dbReference>
<dbReference type="SMR" id="Q5BD67"/>
<dbReference type="FunCoup" id="Q5BD67">
    <property type="interactions" value="220"/>
</dbReference>
<dbReference type="STRING" id="227321.Q5BD67"/>
<dbReference type="EnsemblFungi" id="CBF85019">
    <property type="protein sequence ID" value="CBF85019"/>
    <property type="gene ID" value="ANIA_01513"/>
</dbReference>
<dbReference type="KEGG" id="ani:ANIA_01513"/>
<dbReference type="VEuPathDB" id="FungiDB:AN1513"/>
<dbReference type="eggNOG" id="KOG1481">
    <property type="taxonomic scope" value="Eukaryota"/>
</dbReference>
<dbReference type="HOGENOM" id="CLU_021018_1_0_1"/>
<dbReference type="InParanoid" id="Q5BD67"/>
<dbReference type="OMA" id="WMADYGF"/>
<dbReference type="OrthoDB" id="10259545at2759"/>
<dbReference type="Proteomes" id="UP000000560">
    <property type="component" value="Chromosome VII"/>
</dbReference>
<dbReference type="GO" id="GO:0005737">
    <property type="term" value="C:cytoplasm"/>
    <property type="evidence" value="ECO:0000318"/>
    <property type="project" value="GO_Central"/>
</dbReference>
<dbReference type="GO" id="GO:0005741">
    <property type="term" value="C:mitochondrial outer membrane"/>
    <property type="evidence" value="ECO:0007669"/>
    <property type="project" value="UniProtKB-SubCell"/>
</dbReference>
<dbReference type="GO" id="GO:0004124">
    <property type="term" value="F:cysteine synthase activity"/>
    <property type="evidence" value="ECO:0000318"/>
    <property type="project" value="GO_Central"/>
</dbReference>
<dbReference type="GO" id="GO:0006535">
    <property type="term" value="P:cysteine biosynthetic process from serine"/>
    <property type="evidence" value="ECO:0000318"/>
    <property type="project" value="GO_Central"/>
</dbReference>
<dbReference type="CDD" id="cd01561">
    <property type="entry name" value="CBS_like"/>
    <property type="match status" value="1"/>
</dbReference>
<dbReference type="FunFam" id="3.40.50.1100:FF:000049">
    <property type="entry name" value="Cysteine synthase, putative"/>
    <property type="match status" value="1"/>
</dbReference>
<dbReference type="FunFam" id="3.40.50.1100:FF:000096">
    <property type="entry name" value="Related to cysteine synthase"/>
    <property type="match status" value="1"/>
</dbReference>
<dbReference type="Gene3D" id="3.40.50.1100">
    <property type="match status" value="2"/>
</dbReference>
<dbReference type="InterPro" id="IPR050214">
    <property type="entry name" value="Cys_Synth/Cystath_Beta-Synth"/>
</dbReference>
<dbReference type="InterPro" id="IPR001926">
    <property type="entry name" value="TrpB-like_PALP"/>
</dbReference>
<dbReference type="InterPro" id="IPR036052">
    <property type="entry name" value="TrpB-like_PALP_sf"/>
</dbReference>
<dbReference type="PANTHER" id="PTHR10314">
    <property type="entry name" value="CYSTATHIONINE BETA-SYNTHASE"/>
    <property type="match status" value="1"/>
</dbReference>
<dbReference type="Pfam" id="PF00291">
    <property type="entry name" value="PALP"/>
    <property type="match status" value="1"/>
</dbReference>
<dbReference type="SUPFAM" id="SSF53686">
    <property type="entry name" value="Tryptophan synthase beta subunit-like PLP-dependent enzymes"/>
    <property type="match status" value="1"/>
</dbReference>
<keyword id="KW-0472">Membrane</keyword>
<keyword id="KW-0496">Mitochondrion</keyword>
<keyword id="KW-1000">Mitochondrion outer membrane</keyword>
<keyword id="KW-0663">Pyridoxal phosphate</keyword>
<keyword id="KW-1185">Reference proteome</keyword>
<keyword id="KW-0808">Transferase</keyword>
<keyword id="KW-0812">Transmembrane</keyword>
<keyword id="KW-1133">Transmembrane helix</keyword>